<reference key="1">
    <citation type="journal article" date="2009" name="J. Bacteriol.">
        <title>Complete genome sequence of Rhodobacter sphaeroides KD131.</title>
        <authorList>
            <person name="Lim S.-K."/>
            <person name="Kim S.J."/>
            <person name="Cha S.H."/>
            <person name="Oh Y.-K."/>
            <person name="Rhee H.-J."/>
            <person name="Kim M.-S."/>
            <person name="Lee J.K."/>
        </authorList>
    </citation>
    <scope>NUCLEOTIDE SEQUENCE [LARGE SCALE GENOMIC DNA]</scope>
    <source>
        <strain>KD131 / KCTC 12085</strain>
    </source>
</reference>
<protein>
    <recommendedName>
        <fullName evidence="1">Large ribosomal subunit protein bL12</fullName>
    </recommendedName>
    <alternativeName>
        <fullName evidence="2">50S ribosomal protein L7/L12</fullName>
    </alternativeName>
</protein>
<dbReference type="EMBL" id="CP001150">
    <property type="protein sequence ID" value="ACL99864.1"/>
    <property type="molecule type" value="Genomic_DNA"/>
</dbReference>
<dbReference type="RefSeq" id="WP_002722477.1">
    <property type="nucleotide sequence ID" value="NC_011963.1"/>
</dbReference>
<dbReference type="SMR" id="B9KL82"/>
<dbReference type="GeneID" id="67445491"/>
<dbReference type="KEGG" id="rsk:RSKD131_0005"/>
<dbReference type="HOGENOM" id="CLU_086499_3_0_5"/>
<dbReference type="GO" id="GO:0022625">
    <property type="term" value="C:cytosolic large ribosomal subunit"/>
    <property type="evidence" value="ECO:0007669"/>
    <property type="project" value="TreeGrafter"/>
</dbReference>
<dbReference type="GO" id="GO:0003729">
    <property type="term" value="F:mRNA binding"/>
    <property type="evidence" value="ECO:0007669"/>
    <property type="project" value="TreeGrafter"/>
</dbReference>
<dbReference type="GO" id="GO:0003735">
    <property type="term" value="F:structural constituent of ribosome"/>
    <property type="evidence" value="ECO:0007669"/>
    <property type="project" value="InterPro"/>
</dbReference>
<dbReference type="GO" id="GO:0006412">
    <property type="term" value="P:translation"/>
    <property type="evidence" value="ECO:0007669"/>
    <property type="project" value="UniProtKB-UniRule"/>
</dbReference>
<dbReference type="CDD" id="cd00387">
    <property type="entry name" value="Ribosomal_L7_L12"/>
    <property type="match status" value="1"/>
</dbReference>
<dbReference type="FunFam" id="3.30.1390.10:FF:000001">
    <property type="entry name" value="50S ribosomal protein L7/L12"/>
    <property type="match status" value="1"/>
</dbReference>
<dbReference type="Gene3D" id="3.30.1390.10">
    <property type="match status" value="1"/>
</dbReference>
<dbReference type="Gene3D" id="1.20.5.710">
    <property type="entry name" value="Single helix bin"/>
    <property type="match status" value="1"/>
</dbReference>
<dbReference type="HAMAP" id="MF_00368">
    <property type="entry name" value="Ribosomal_bL12"/>
    <property type="match status" value="1"/>
</dbReference>
<dbReference type="InterPro" id="IPR000206">
    <property type="entry name" value="Ribosomal_bL12"/>
</dbReference>
<dbReference type="InterPro" id="IPR013823">
    <property type="entry name" value="Ribosomal_bL12_C"/>
</dbReference>
<dbReference type="InterPro" id="IPR014719">
    <property type="entry name" value="Ribosomal_bL12_C/ClpS-like"/>
</dbReference>
<dbReference type="InterPro" id="IPR008932">
    <property type="entry name" value="Ribosomal_bL12_oligo"/>
</dbReference>
<dbReference type="InterPro" id="IPR036235">
    <property type="entry name" value="Ribosomal_bL12_oligo_N_sf"/>
</dbReference>
<dbReference type="NCBIfam" id="TIGR00855">
    <property type="entry name" value="L12"/>
    <property type="match status" value="1"/>
</dbReference>
<dbReference type="PANTHER" id="PTHR45987">
    <property type="entry name" value="39S RIBOSOMAL PROTEIN L12"/>
    <property type="match status" value="1"/>
</dbReference>
<dbReference type="PANTHER" id="PTHR45987:SF4">
    <property type="entry name" value="LARGE RIBOSOMAL SUBUNIT PROTEIN BL12M"/>
    <property type="match status" value="1"/>
</dbReference>
<dbReference type="Pfam" id="PF00542">
    <property type="entry name" value="Ribosomal_L12"/>
    <property type="match status" value="1"/>
</dbReference>
<dbReference type="Pfam" id="PF16320">
    <property type="entry name" value="Ribosomal_L12_N"/>
    <property type="match status" value="1"/>
</dbReference>
<dbReference type="SUPFAM" id="SSF54736">
    <property type="entry name" value="ClpS-like"/>
    <property type="match status" value="1"/>
</dbReference>
<dbReference type="SUPFAM" id="SSF48300">
    <property type="entry name" value="Ribosomal protein L7/12, oligomerisation (N-terminal) domain"/>
    <property type="match status" value="1"/>
</dbReference>
<feature type="chain" id="PRO_1000133858" description="Large ribosomal subunit protein bL12">
    <location>
        <begin position="1"/>
        <end position="125"/>
    </location>
</feature>
<sequence length="125" mass="12930">MADLNKLAEDIVGLTLLEAQELKTILKDKYGIEPAAGGAVMMAGPAAGAAAPAEEEKTEFDVVLTDAGANKINVIKEVRAITGLGLKEAKDLVEAGGKVKEAVAKADAEAMKKKLEEAGAKVELK</sequence>
<keyword id="KW-0687">Ribonucleoprotein</keyword>
<keyword id="KW-0689">Ribosomal protein</keyword>
<organism>
    <name type="scientific">Cereibacter sphaeroides (strain KD131 / KCTC 12085)</name>
    <name type="common">Rhodobacter sphaeroides</name>
    <dbReference type="NCBI Taxonomy" id="557760"/>
    <lineage>
        <taxon>Bacteria</taxon>
        <taxon>Pseudomonadati</taxon>
        <taxon>Pseudomonadota</taxon>
        <taxon>Alphaproteobacteria</taxon>
        <taxon>Rhodobacterales</taxon>
        <taxon>Paracoccaceae</taxon>
        <taxon>Cereibacter</taxon>
    </lineage>
</organism>
<comment type="function">
    <text evidence="1">Forms part of the ribosomal stalk which helps the ribosome interact with GTP-bound translation factors. Is thus essential for accurate translation.</text>
</comment>
<comment type="subunit">
    <text evidence="1">Homodimer. Part of the ribosomal stalk of the 50S ribosomal subunit. Forms a multimeric L10(L12)X complex, where L10 forms an elongated spine to which 2 to 4 L12 dimers bind in a sequential fashion. Binds GTP-bound translation factors.</text>
</comment>
<comment type="similarity">
    <text evidence="1">Belongs to the bacterial ribosomal protein bL12 family.</text>
</comment>
<evidence type="ECO:0000255" key="1">
    <source>
        <dbReference type="HAMAP-Rule" id="MF_00368"/>
    </source>
</evidence>
<evidence type="ECO:0000305" key="2"/>
<accession>B9KL82</accession>
<gene>
    <name evidence="1" type="primary">rplL</name>
    <name type="ordered locus">RSKD131_0005</name>
</gene>
<name>RL7_CERSK</name>
<proteinExistence type="inferred from homology"/>